<comment type="function">
    <text>May play a role in plant defense. Probably has no oxalate oxidase activity even if the active site is conserved.</text>
</comment>
<comment type="subunit">
    <text evidence="1">Oligomer (believed to be a pentamer but probably hexamer).</text>
</comment>
<comment type="subcellular location">
    <subcellularLocation>
        <location evidence="1">Secreted</location>
        <location evidence="1">Extracellular space</location>
        <location evidence="1">Apoplast</location>
    </subcellularLocation>
</comment>
<comment type="similarity">
    <text evidence="3">Belongs to the germin family.</text>
</comment>
<accession>Q9FIC6</accession>
<reference key="1">
    <citation type="journal article" date="1998" name="DNA Res.">
        <title>Structural analysis of Arabidopsis thaliana chromosome 5. VIII. Sequence features of the regions of 1,081,958 bp covered by seventeen physically assigned P1 and TAC clones.</title>
        <authorList>
            <person name="Asamizu E."/>
            <person name="Sato S."/>
            <person name="Kaneko T."/>
            <person name="Nakamura Y."/>
            <person name="Kotani H."/>
            <person name="Miyajima N."/>
            <person name="Tabata S."/>
        </authorList>
    </citation>
    <scope>NUCLEOTIDE SEQUENCE [LARGE SCALE GENOMIC DNA]</scope>
    <source>
        <strain>cv. Columbia</strain>
    </source>
</reference>
<reference key="2">
    <citation type="journal article" date="2017" name="Plant J.">
        <title>Araport11: a complete reannotation of the Arabidopsis thaliana reference genome.</title>
        <authorList>
            <person name="Cheng C.Y."/>
            <person name="Krishnakumar V."/>
            <person name="Chan A.P."/>
            <person name="Thibaud-Nissen F."/>
            <person name="Schobel S."/>
            <person name="Town C.D."/>
        </authorList>
    </citation>
    <scope>GENOME REANNOTATION</scope>
    <source>
        <strain>cv. Columbia</strain>
    </source>
</reference>
<reference key="3">
    <citation type="journal article" date="2004" name="Genome Res.">
        <title>Whole genome sequence comparisons and 'full-length' cDNA sequences: a combined approach to evaluate and improve Arabidopsis genome annotation.</title>
        <authorList>
            <person name="Castelli V."/>
            <person name="Aury J.-M."/>
            <person name="Jaillon O."/>
            <person name="Wincker P."/>
            <person name="Clepet C."/>
            <person name="Menard M."/>
            <person name="Cruaud C."/>
            <person name="Quetier F."/>
            <person name="Scarpelli C."/>
            <person name="Schaechter V."/>
            <person name="Temple G."/>
            <person name="Caboche M."/>
            <person name="Weissenbach J."/>
            <person name="Salanoubat M."/>
        </authorList>
    </citation>
    <scope>NUCLEOTIDE SEQUENCE [LARGE SCALE MRNA]</scope>
    <source>
        <strain>cv. Columbia</strain>
    </source>
</reference>
<proteinExistence type="evidence at transcript level"/>
<organism>
    <name type="scientific">Arabidopsis thaliana</name>
    <name type="common">Mouse-ear cress</name>
    <dbReference type="NCBI Taxonomy" id="3702"/>
    <lineage>
        <taxon>Eukaryota</taxon>
        <taxon>Viridiplantae</taxon>
        <taxon>Streptophyta</taxon>
        <taxon>Embryophyta</taxon>
        <taxon>Tracheophyta</taxon>
        <taxon>Spermatophyta</taxon>
        <taxon>Magnoliopsida</taxon>
        <taxon>eudicotyledons</taxon>
        <taxon>Gunneridae</taxon>
        <taxon>Pentapetalae</taxon>
        <taxon>rosids</taxon>
        <taxon>malvids</taxon>
        <taxon>Brassicales</taxon>
        <taxon>Brassicaceae</taxon>
        <taxon>Camelineae</taxon>
        <taxon>Arabidopsis</taxon>
    </lineage>
</organism>
<name>GL117_ARATH</name>
<dbReference type="EMBL" id="AB016892">
    <property type="protein sequence ID" value="BAB10836.1"/>
    <property type="molecule type" value="Genomic_DNA"/>
</dbReference>
<dbReference type="EMBL" id="CP002688">
    <property type="protein sequence ID" value="AED94399.1"/>
    <property type="molecule type" value="Genomic_DNA"/>
</dbReference>
<dbReference type="EMBL" id="BX833065">
    <property type="status" value="NOT_ANNOTATED_CDS"/>
    <property type="molecule type" value="mRNA"/>
</dbReference>
<dbReference type="RefSeq" id="NP_198731.1">
    <property type="nucleotide sequence ID" value="NM_123277.4"/>
</dbReference>
<dbReference type="SMR" id="Q9FIC6"/>
<dbReference type="FunCoup" id="Q9FIC6">
    <property type="interactions" value="33"/>
</dbReference>
<dbReference type="STRING" id="3702.Q9FIC6"/>
<dbReference type="GlyGen" id="Q9FIC6">
    <property type="glycosylation" value="1 site"/>
</dbReference>
<dbReference type="PaxDb" id="3702-AT5G39150.1"/>
<dbReference type="EnsemblPlants" id="AT5G39150.1">
    <property type="protein sequence ID" value="AT5G39150.1"/>
    <property type="gene ID" value="AT5G39150"/>
</dbReference>
<dbReference type="GeneID" id="833908"/>
<dbReference type="Gramene" id="AT5G39150.1">
    <property type="protein sequence ID" value="AT5G39150.1"/>
    <property type="gene ID" value="AT5G39150"/>
</dbReference>
<dbReference type="KEGG" id="ath:AT5G39150"/>
<dbReference type="Araport" id="AT5G39150"/>
<dbReference type="TAIR" id="AT5G39150"/>
<dbReference type="eggNOG" id="ENOG502QQ4A">
    <property type="taxonomic scope" value="Eukaryota"/>
</dbReference>
<dbReference type="HOGENOM" id="CLU_015790_0_0_1"/>
<dbReference type="InParanoid" id="Q9FIC6"/>
<dbReference type="OMA" id="ITYIHRT"/>
<dbReference type="PhylomeDB" id="Q9FIC6"/>
<dbReference type="PRO" id="PR:Q9FIC6"/>
<dbReference type="Proteomes" id="UP000006548">
    <property type="component" value="Chromosome 5"/>
</dbReference>
<dbReference type="ExpressionAtlas" id="Q9FIC6">
    <property type="expression patterns" value="baseline and differential"/>
</dbReference>
<dbReference type="GO" id="GO:0048046">
    <property type="term" value="C:apoplast"/>
    <property type="evidence" value="ECO:0007669"/>
    <property type="project" value="UniProtKB-SubCell"/>
</dbReference>
<dbReference type="GO" id="GO:0030145">
    <property type="term" value="F:manganese ion binding"/>
    <property type="evidence" value="ECO:0007669"/>
    <property type="project" value="InterPro"/>
</dbReference>
<dbReference type="CDD" id="cd02241">
    <property type="entry name" value="cupin_OxOx"/>
    <property type="match status" value="1"/>
</dbReference>
<dbReference type="FunFam" id="2.60.120.10:FF:000005">
    <property type="entry name" value="Germin-like protein subfamily 1 member 8"/>
    <property type="match status" value="1"/>
</dbReference>
<dbReference type="Gene3D" id="2.60.120.10">
    <property type="entry name" value="Jelly Rolls"/>
    <property type="match status" value="1"/>
</dbReference>
<dbReference type="InterPro" id="IPR006045">
    <property type="entry name" value="Cupin_1"/>
</dbReference>
<dbReference type="InterPro" id="IPR001929">
    <property type="entry name" value="Germin"/>
</dbReference>
<dbReference type="InterPro" id="IPR019780">
    <property type="entry name" value="Germin_Mn-BS"/>
</dbReference>
<dbReference type="InterPro" id="IPR014710">
    <property type="entry name" value="RmlC-like_jellyroll"/>
</dbReference>
<dbReference type="InterPro" id="IPR011051">
    <property type="entry name" value="RmlC_Cupin_sf"/>
</dbReference>
<dbReference type="PANTHER" id="PTHR31238">
    <property type="entry name" value="GERMIN-LIKE PROTEIN SUBFAMILY 3 MEMBER 3"/>
    <property type="match status" value="1"/>
</dbReference>
<dbReference type="Pfam" id="PF00190">
    <property type="entry name" value="Cupin_1"/>
    <property type="match status" value="1"/>
</dbReference>
<dbReference type="PRINTS" id="PR00325">
    <property type="entry name" value="GERMIN"/>
</dbReference>
<dbReference type="SMART" id="SM00835">
    <property type="entry name" value="Cupin_1"/>
    <property type="match status" value="1"/>
</dbReference>
<dbReference type="SUPFAM" id="SSF51182">
    <property type="entry name" value="RmlC-like cupins"/>
    <property type="match status" value="1"/>
</dbReference>
<dbReference type="PROSITE" id="PS00725">
    <property type="entry name" value="GERMIN"/>
    <property type="match status" value="1"/>
</dbReference>
<keyword id="KW-0052">Apoplast</keyword>
<keyword id="KW-1015">Disulfide bond</keyword>
<keyword id="KW-0325">Glycoprotein</keyword>
<keyword id="KW-0464">Manganese</keyword>
<keyword id="KW-0479">Metal-binding</keyword>
<keyword id="KW-1185">Reference proteome</keyword>
<keyword id="KW-0964">Secreted</keyword>
<keyword id="KW-0732">Signal</keyword>
<gene>
    <name type="ordered locus">At5g39150</name>
    <name type="ORF">MXF12.18</name>
    <name type="ORF">MXF12_160</name>
</gene>
<protein>
    <recommendedName>
        <fullName>Germin-like protein subfamily 1 member 17</fullName>
    </recommendedName>
</protein>
<sequence>MKVSMSLILITLSALVTIAKAYDPSPLQDFCVAIDDPKNGVFVNGKFCKDPKQAKAEDFFSSGLNQAGITNNKVQSNVTTVNVDQIPGLNTLGISLVRIDYAPYGQNPPHTHPRATEILVLVEGTLYVGFVSSNQDNNRLFAKVLNPGDVFVFPIGMIHFQVNIGKTPAVAFAGLSSQNAGVITIADTVFGSTPPINPDILAQAFQLDVNVVKDLEAKFKN</sequence>
<evidence type="ECO:0000250" key="1"/>
<evidence type="ECO:0000255" key="2"/>
<evidence type="ECO:0000305" key="3"/>
<feature type="signal peptide" evidence="2">
    <location>
        <begin position="1"/>
        <end position="21"/>
    </location>
</feature>
<feature type="chain" id="PRO_0000010817" description="Germin-like protein subfamily 1 member 17">
    <location>
        <begin position="22"/>
        <end position="221"/>
    </location>
</feature>
<feature type="domain" description="Cupin type-1" evidence="2">
    <location>
        <begin position="76"/>
        <end position="213"/>
    </location>
</feature>
<feature type="binding site" evidence="1">
    <location>
        <position position="110"/>
    </location>
    <ligand>
        <name>Mn(2+)</name>
        <dbReference type="ChEBI" id="CHEBI:29035"/>
    </ligand>
</feature>
<feature type="binding site" evidence="1">
    <location>
        <position position="112"/>
    </location>
    <ligand>
        <name>Mn(2+)</name>
        <dbReference type="ChEBI" id="CHEBI:29035"/>
    </ligand>
</feature>
<feature type="binding site" evidence="1">
    <location>
        <position position="117"/>
    </location>
    <ligand>
        <name>Mn(2+)</name>
        <dbReference type="ChEBI" id="CHEBI:29035"/>
    </ligand>
</feature>
<feature type="binding site" evidence="1">
    <location>
        <position position="159"/>
    </location>
    <ligand>
        <name>Mn(2+)</name>
        <dbReference type="ChEBI" id="CHEBI:29035"/>
    </ligand>
</feature>
<feature type="glycosylation site" description="N-linked (GlcNAc...) asparagine" evidence="2">
    <location>
        <position position="77"/>
    </location>
</feature>
<feature type="disulfide bond" evidence="1">
    <location>
        <begin position="31"/>
        <end position="48"/>
    </location>
</feature>